<proteinExistence type="evidence at transcript level"/>
<keyword id="KW-0013">ADP-ribosylation</keyword>
<keyword id="KW-0963">Cytoplasm</keyword>
<keyword id="KW-1017">Isopeptide bond</keyword>
<keyword id="KW-0472">Membrane</keyword>
<keyword id="KW-0496">Mitochondrion</keyword>
<keyword id="KW-1000">Mitochondrion outer membrane</keyword>
<keyword id="KW-0539">Nucleus</keyword>
<keyword id="KW-0597">Phosphoprotein</keyword>
<keyword id="KW-1185">Reference proteome</keyword>
<keyword id="KW-0677">Repeat</keyword>
<keyword id="KW-0832">Ubl conjugation</keyword>
<protein>
    <recommendedName>
        <fullName>Polyubiquitin-C</fullName>
    </recommendedName>
    <component>
        <recommendedName>
            <fullName>Ubiquitin-related</fullName>
        </recommendedName>
    </component>
    <component>
        <recommendedName>
            <fullName>Ubiquitin</fullName>
        </recommendedName>
    </component>
</protein>
<sequence>MQIFVKTLTGKTITLEVEPSDTIENVKGKIQEKEGIPPDQQRLIFAGKQLEDGRTLSDYNIQKESTLHLVLRLRGGMQIFVKTLTGKTITLEVEPSDTIENVKAKIQDKEGIPPDQQRLIFAGKQLEDGRTLSDYNIQKESTLHLVLRLRGGMQIFVKTLTGKTITLEVEPSDTIENVKAKIQDKEGIPPDQQRLIFAGKQLEDGRTLSDYNIQKESTLHLVLRLRGGMQIFVKTLTGKTITLEVEPSDTIENVKAKIQDKEGIPPDQQRLIFAGKQLEDGRTLSDYNIQKESTLHLVLRLRGGMQIFVKTLTGKTITLEVEPSDTIENVKAKIQDKEGIPPDQQRLIFAGKQLEDGRTLSDYNIQKESTLHLVLRLRGGMQIFVKTLTGKTITLEVEPSDTIENVKAKIQDKEGIPPDQQRLIFAGKQLEDGRTLSDYNIQKESTLHLVLRLRGGMQIFVKTLTGKTITLEVEPSDTIENVKAKIQDKEGIPPDQQRLIFAGKQLEDGRTLSDYNIQKESTLHLVLRLRGGF</sequence>
<evidence type="ECO:0000250" key="1"/>
<evidence type="ECO:0000250" key="2">
    <source>
        <dbReference type="UniProtKB" id="P0CG48"/>
    </source>
</evidence>
<evidence type="ECO:0000255" key="3">
    <source>
        <dbReference type="PROSITE-ProRule" id="PRU00214"/>
    </source>
</evidence>
<evidence type="ECO:0000305" key="4"/>
<organism>
    <name type="scientific">Sus scrofa</name>
    <name type="common">Pig</name>
    <dbReference type="NCBI Taxonomy" id="9823"/>
    <lineage>
        <taxon>Eukaryota</taxon>
        <taxon>Metazoa</taxon>
        <taxon>Chordata</taxon>
        <taxon>Craniata</taxon>
        <taxon>Vertebrata</taxon>
        <taxon>Euteleostomi</taxon>
        <taxon>Mammalia</taxon>
        <taxon>Eutheria</taxon>
        <taxon>Laurasiatheria</taxon>
        <taxon>Artiodactyla</taxon>
        <taxon>Suina</taxon>
        <taxon>Suidae</taxon>
        <taxon>Sus</taxon>
    </lineage>
</organism>
<gene>
    <name type="primary">UBC</name>
</gene>
<accession>P0CG68</accession>
<accession>P02248</accession>
<accession>P02249</accession>
<accession>P02250</accession>
<accession>P62974</accession>
<accession>Q29120</accession>
<accession>Q29203</accession>
<accession>Q29252</accession>
<accession>Q91887</accession>
<accession>Q91888</accession>
<accession>Q95260</accession>
<comment type="function">
    <molecule>Ubiquitin</molecule>
    <text evidence="2">Exists either covalently attached to another protein, or free (unanchored). When covalently bound, it is conjugated to target proteins via an isopeptide bond either as a monomer (monoubiquitin), a polymer linked via different Lys residues of the ubiquitin (polyubiquitin chains) or a linear polymer linked via the initiator Met of the ubiquitin (linear polyubiquitin chains). Polyubiquitin chains, when attached to a target protein, have different functions depending on the Lys residue of the ubiquitin that is linked: Lys-6-linked may be involved in DNA repair; Lys-11-linked is involved in ERAD (endoplasmic reticulum-associated degradation) and in cell-cycle regulation; Lys-29-linked is involved in proteotoxic stress response and cell cycle; Lys-33-linked is involved in kinase modification; Lys-48-linked is involved in protein degradation via the proteasome; Lys-63-linked is involved in endocytosis, DNA-damage responses as well as in signaling processes leading to activation of the transcription factor NF-kappa-B. Linear polymer chains formed via attachment by the initiator Met lead to cell signaling. Ubiquitin is usually conjugated to Lys residues of target proteins, however, in rare cases, conjugation to Cys or Ser residues has been observed. When polyubiquitin is free (unanchored-polyubiquitin), it also has distinct roles, such as in activation of protein kinases, and in signaling (By similarity). During ubiquitination, the acceptor ubiquitin is positioned in the active site via direct interaction with the E2 ubiquitin-conjugating enzymes such as UBE2R2 (By similarity). As a monoubiquitin, its C-terminal glycine is recognized as a C-degron by Cul2-RING (CRL2) E3 ubiquitin-protein ligase complexes (By similarity).</text>
</comment>
<comment type="subcellular location">
    <molecule>Ubiquitin</molecule>
    <subcellularLocation>
        <location evidence="1">Cytoplasm</location>
    </subcellularLocation>
    <subcellularLocation>
        <location evidence="1">Nucleus</location>
    </subcellularLocation>
    <subcellularLocation>
        <location evidence="2">Mitochondrion outer membrane</location>
        <topology evidence="2">Peripheral membrane protein</topology>
    </subcellularLocation>
</comment>
<comment type="PTM">
    <molecule>Ubiquitin</molecule>
    <text evidence="2">Phosphorylated at Ser-65 by PINK1 during mitophagy. Phosphorylated ubiquitin specifically binds and activates parkin (PRKN), triggering mitophagy. Phosphorylation does not affect E1-mediated E2 charging of ubiquitin but affects discharging of E2 enzymes to form polyubiquitin chains. It also affects deubiquitination by deubiquitinase enzymes such as USP30.</text>
</comment>
<comment type="PTM">
    <molecule>Ubiquitin</molecule>
    <text evidence="2">Mono-ADP-ribosylated at the C-terminus by PARP9, a component of the PPAR9-DTX3L complex. ADP-ribosylation requires processing by E1 and E2 enzymes and prevents ubiquitin conjugation to substrates such as histones.</text>
</comment>
<comment type="miscellaneous">
    <text>Ubiquitin is encoded by 4 different genes. UBA52 and RPS27A genes code for a single copy of ubiquitin fused to the ribosomal proteins eL40 and eS31, respectively. UBB and UBC genes code for a polyubiquitin precursor with exact head to tail repeats, the number of repeats differ between species and strains.</text>
</comment>
<comment type="miscellaneous">
    <text>For the sake of clarity sequence features are annotated only for the first chain, and are not repeated for each of the following chains.</text>
</comment>
<comment type="similarity">
    <text evidence="4">Belongs to the ubiquitin family.</text>
</comment>
<feature type="chain" id="PRO_0000114803" description="Ubiquitin-related">
    <location>
        <begin position="1"/>
        <end position="76"/>
    </location>
</feature>
<feature type="chain" id="PRO_0000396217" description="Ubiquitin">
    <location>
        <begin position="77"/>
        <end position="152"/>
    </location>
</feature>
<feature type="chain" id="PRO_0000396218" description="Ubiquitin">
    <location>
        <begin position="153"/>
        <end position="228"/>
    </location>
</feature>
<feature type="chain" id="PRO_0000396219" description="Ubiquitin">
    <location>
        <begin position="229"/>
        <end position="304"/>
    </location>
</feature>
<feature type="chain" id="PRO_0000396220" description="Ubiquitin">
    <location>
        <begin position="305"/>
        <end position="380"/>
    </location>
</feature>
<feature type="chain" id="PRO_0000396221" description="Ubiquitin">
    <location>
        <begin position="381"/>
        <end position="456"/>
    </location>
</feature>
<feature type="chain" id="PRO_0000396222" description="Ubiquitin">
    <location>
        <begin position="457"/>
        <end position="532"/>
    </location>
</feature>
<feature type="propeptide" id="PRO_0000396223">
    <location>
        <position position="533"/>
    </location>
</feature>
<feature type="domain" description="Ubiquitin-like 1" evidence="3">
    <location>
        <begin position="1"/>
        <end position="76"/>
    </location>
</feature>
<feature type="domain" description="Ubiquitin-like 2" evidence="3">
    <location>
        <begin position="77"/>
        <end position="152"/>
    </location>
</feature>
<feature type="domain" description="Ubiquitin-like 3" evidence="3">
    <location>
        <begin position="153"/>
        <end position="228"/>
    </location>
</feature>
<feature type="domain" description="Ubiquitin-like 4" evidence="3">
    <location>
        <begin position="229"/>
        <end position="304"/>
    </location>
</feature>
<feature type="domain" description="Ubiquitin-like 5" evidence="3">
    <location>
        <begin position="305"/>
        <end position="380"/>
    </location>
</feature>
<feature type="domain" description="Ubiquitin-like 6" evidence="3">
    <location>
        <begin position="381"/>
        <end position="456"/>
    </location>
</feature>
<feature type="domain" description="Ubiquitin-like 7" evidence="3">
    <location>
        <begin position="457"/>
        <end position="532"/>
    </location>
</feature>
<feature type="site" description="Interacts with activating enzyme">
    <location>
        <position position="54"/>
    </location>
</feature>
<feature type="site" description="Essential for function">
    <location>
        <position position="68"/>
    </location>
</feature>
<feature type="site" description="Interacts with activating enzyme">
    <location>
        <position position="72"/>
    </location>
</feature>
<feature type="modified residue" description="Phosphoserine; by PINK1" evidence="2">
    <location>
        <position position="65"/>
    </location>
</feature>
<feature type="modified residue" description="ADP-ribosylglycine" evidence="2">
    <location>
        <position position="76"/>
    </location>
</feature>
<feature type="cross-link" description="Glycyl lysine isopeptide (Lys-Gly) (interchain with G-Cter in ubiquitin)" evidence="2">
    <location>
        <position position="6"/>
    </location>
</feature>
<feature type="cross-link" description="Glycyl lysine isopeptide (Lys-Gly) (interchain with G-Cter in ubiquitin)" evidence="2">
    <location>
        <position position="11"/>
    </location>
</feature>
<feature type="cross-link" description="Glycyl lysine isopeptide (Lys-Gly) (interchain with G-Cter in ubiquitin)" evidence="2">
    <location>
        <position position="27"/>
    </location>
</feature>
<feature type="cross-link" description="Glycyl lysine isopeptide (Lys-Gly) (interchain with G-Cter in ubiquitin)" evidence="2">
    <location>
        <position position="29"/>
    </location>
</feature>
<feature type="cross-link" description="Glycyl lysine isopeptide (Lys-Gly) (interchain with G-Cter in ubiquitin)" evidence="2">
    <location>
        <position position="33"/>
    </location>
</feature>
<feature type="cross-link" description="Glycyl lysine isopeptide (Lys-Gly) (interchain with G-Cter in ubiquitin)" evidence="2">
    <location>
        <position position="48"/>
    </location>
</feature>
<feature type="cross-link" description="Glycyl lysine isopeptide (Lys-Gly) (interchain with G-Cter in ubiquitin)" evidence="2">
    <location>
        <position position="63"/>
    </location>
</feature>
<feature type="cross-link" description="Glycyl lysine isopeptide (Gly-Lys) (interchain with K-? in acceptor proteins)" evidence="3">
    <location>
        <position position="76"/>
    </location>
</feature>
<dbReference type="EMBL" id="CU633504">
    <property type="status" value="NOT_ANNOTATED_CDS"/>
    <property type="molecule type" value="Genomic_DNA"/>
</dbReference>
<dbReference type="EMBL" id="M18159">
    <property type="protein sequence ID" value="AAA31133.1"/>
    <property type="molecule type" value="mRNA"/>
</dbReference>
<dbReference type="RefSeq" id="XP_003483459.1">
    <property type="nucleotide sequence ID" value="XM_003483411.3"/>
</dbReference>
<dbReference type="SMR" id="P0CG68"/>
<dbReference type="FunCoup" id="P0CG68">
    <property type="interactions" value="96"/>
</dbReference>
<dbReference type="STRING" id="9823.ENSSSCP00000062692"/>
<dbReference type="PaxDb" id="9823-ENSSSCP00000026622"/>
<dbReference type="PeptideAtlas" id="P0CG68"/>
<dbReference type="Ensembl" id="ENSSSCT00040078877.1">
    <property type="protein sequence ID" value="ENSSSCP00040034040.1"/>
    <property type="gene ID" value="ENSSSCG00040057990.1"/>
</dbReference>
<dbReference type="Ensembl" id="ENSSSCT00090045289">
    <property type="protein sequence ID" value="ENSSSCP00090028051"/>
    <property type="gene ID" value="ENSSSCG00090025639"/>
</dbReference>
<dbReference type="GeneID" id="396966"/>
<dbReference type="KEGG" id="ssc:396966"/>
<dbReference type="CTD" id="7316"/>
<dbReference type="eggNOG" id="KOG0001">
    <property type="taxonomic scope" value="Eukaryota"/>
</dbReference>
<dbReference type="HOGENOM" id="CLU_010412_1_2_1"/>
<dbReference type="InParanoid" id="P0CG68"/>
<dbReference type="OrthoDB" id="428577at2759"/>
<dbReference type="TreeFam" id="TF354256"/>
<dbReference type="Reactome" id="R-SSC-110312">
    <property type="pathway name" value="Translesion synthesis by REV1"/>
</dbReference>
<dbReference type="Reactome" id="R-SSC-110314">
    <property type="pathway name" value="Recognition of DNA damage by PCNA-containing replication complex"/>
</dbReference>
<dbReference type="Reactome" id="R-SSC-110320">
    <property type="pathway name" value="Translesion Synthesis by POLH"/>
</dbReference>
<dbReference type="Reactome" id="R-SSC-1234176">
    <property type="pathway name" value="Oxygen-dependent proline hydroxylation of Hypoxia-inducible Factor Alpha"/>
</dbReference>
<dbReference type="Reactome" id="R-SSC-1253288">
    <property type="pathway name" value="Downregulation of ERBB4 signaling"/>
</dbReference>
<dbReference type="Reactome" id="R-SSC-1295596">
    <property type="pathway name" value="Spry regulation of FGF signaling"/>
</dbReference>
<dbReference type="Reactome" id="R-SSC-1358803">
    <property type="pathway name" value="Downregulation of ERBB2:ERBB3 signaling"/>
</dbReference>
<dbReference type="Reactome" id="R-SSC-174048">
    <property type="pathway name" value="APC/C:Cdc20 mediated degradation of Cyclin B"/>
</dbReference>
<dbReference type="Reactome" id="R-SSC-174084">
    <property type="pathway name" value="Autodegradation of Cdh1 by Cdh1:APC/C"/>
</dbReference>
<dbReference type="Reactome" id="R-SSC-174113">
    <property type="pathway name" value="SCF-beta-TrCP mediated degradation of Emi1"/>
</dbReference>
<dbReference type="Reactome" id="R-SSC-174154">
    <property type="pathway name" value="APC/C:Cdc20 mediated degradation of Securin"/>
</dbReference>
<dbReference type="Reactome" id="R-SSC-174178">
    <property type="pathway name" value="APC/C:Cdh1 mediated degradation of Cdc20 and other APC/C:Cdh1 targeted proteins in late mitosis/early G1"/>
</dbReference>
<dbReference type="Reactome" id="R-SSC-174184">
    <property type="pathway name" value="Cdc20:Phospho-APC/C mediated degradation of Cyclin A"/>
</dbReference>
<dbReference type="Reactome" id="R-SSC-179409">
    <property type="pathway name" value="APC-Cdc20 mediated degradation of Nek2A"/>
</dbReference>
<dbReference type="Reactome" id="R-SSC-182971">
    <property type="pathway name" value="EGFR downregulation"/>
</dbReference>
<dbReference type="Reactome" id="R-SSC-187577">
    <property type="pathway name" value="SCF(Skp2)-mediated degradation of p27/p21"/>
</dbReference>
<dbReference type="Reactome" id="R-SSC-195253">
    <property type="pathway name" value="Degradation of beta-catenin by the destruction complex"/>
</dbReference>
<dbReference type="Reactome" id="R-SSC-201681">
    <property type="pathway name" value="TCF dependent signaling in response to WNT"/>
</dbReference>
<dbReference type="Reactome" id="R-SSC-202424">
    <property type="pathway name" value="Downstream TCR signaling"/>
</dbReference>
<dbReference type="Reactome" id="R-SSC-209543">
    <property type="pathway name" value="p75NTR recruits signalling complexes"/>
</dbReference>
<dbReference type="Reactome" id="R-SSC-209560">
    <property type="pathway name" value="NF-kB is activated and signals survival"/>
</dbReference>
<dbReference type="Reactome" id="R-SSC-2122948">
    <property type="pathway name" value="Activated NOTCH1 Transmits Signal to the Nucleus"/>
</dbReference>
<dbReference type="Reactome" id="R-SSC-2173788">
    <property type="pathway name" value="Downregulation of TGF-beta receptor signaling"/>
</dbReference>
<dbReference type="Reactome" id="R-SSC-2173791">
    <property type="pathway name" value="TGF-beta receptor signaling in EMT (epithelial to mesenchymal transition)"/>
</dbReference>
<dbReference type="Reactome" id="R-SSC-2173795">
    <property type="pathway name" value="Downregulation of SMAD2/3:SMAD4 transcriptional activity"/>
</dbReference>
<dbReference type="Reactome" id="R-SSC-2173796">
    <property type="pathway name" value="SMAD2/SMAD3:SMAD4 heterotrimer regulates transcription"/>
</dbReference>
<dbReference type="Reactome" id="R-SSC-2467813">
    <property type="pathway name" value="Separation of Sister Chromatids"/>
</dbReference>
<dbReference type="Reactome" id="R-SSC-2559582">
    <property type="pathway name" value="Senescence-Associated Secretory Phenotype (SASP)"/>
</dbReference>
<dbReference type="Reactome" id="R-SSC-2871837">
    <property type="pathway name" value="FCERI mediated NF-kB activation"/>
</dbReference>
<dbReference type="Reactome" id="R-SSC-3134975">
    <property type="pathway name" value="Regulation of innate immune responses to cytosolic DNA"/>
</dbReference>
<dbReference type="Reactome" id="R-SSC-349425">
    <property type="pathway name" value="Autodegradation of the E3 ubiquitin ligase COP1"/>
</dbReference>
<dbReference type="Reactome" id="R-SSC-3769402">
    <property type="pathway name" value="Deactivation of the beta-catenin transactivating complex"/>
</dbReference>
<dbReference type="Reactome" id="R-SSC-382556">
    <property type="pathway name" value="ABC-family proteins mediated transport"/>
</dbReference>
<dbReference type="Reactome" id="R-SSC-445989">
    <property type="pathway name" value="TAK1-dependent IKK and NF-kappa-B activation"/>
</dbReference>
<dbReference type="Reactome" id="R-SSC-450302">
    <property type="pathway name" value="activated TAK1 mediates p38 MAPK activation"/>
</dbReference>
<dbReference type="Reactome" id="R-SSC-450321">
    <property type="pathway name" value="JNK (c-Jun kinases) phosphorylation and activation mediated by activated human TAK1"/>
</dbReference>
<dbReference type="Reactome" id="R-SSC-450408">
    <property type="pathway name" value="AUF1 (hnRNP D0) binds and destabilizes mRNA"/>
</dbReference>
<dbReference type="Reactome" id="R-SSC-4608870">
    <property type="pathway name" value="Asymmetric localization of PCP proteins"/>
</dbReference>
<dbReference type="Reactome" id="R-SSC-4641257">
    <property type="pathway name" value="Degradation of AXIN"/>
</dbReference>
<dbReference type="Reactome" id="R-SSC-4641258">
    <property type="pathway name" value="Degradation of DVL"/>
</dbReference>
<dbReference type="Reactome" id="R-SSC-4641263">
    <property type="pathway name" value="Regulation of FZD by ubiquitination"/>
</dbReference>
<dbReference type="Reactome" id="R-SSC-532668">
    <property type="pathway name" value="N-glycan trimming in the ER and Calnexin/Calreticulin cycle"/>
</dbReference>
<dbReference type="Reactome" id="R-SSC-5357905">
    <property type="pathway name" value="Regulation of TNFR1 signaling"/>
</dbReference>
<dbReference type="Reactome" id="R-SSC-5357956">
    <property type="pathway name" value="TNFR1-induced NF-kappa-B signaling pathway"/>
</dbReference>
<dbReference type="Reactome" id="R-SSC-5358346">
    <property type="pathway name" value="Hedgehog ligand biogenesis"/>
</dbReference>
<dbReference type="Reactome" id="R-SSC-5607761">
    <property type="pathway name" value="Dectin-1 mediated noncanonical NF-kB signaling"/>
</dbReference>
<dbReference type="Reactome" id="R-SSC-5607764">
    <property type="pathway name" value="CLEC7A (Dectin-1) signaling"/>
</dbReference>
<dbReference type="Reactome" id="R-SSC-5610780">
    <property type="pathway name" value="Degradation of GLI1 by the proteasome"/>
</dbReference>
<dbReference type="Reactome" id="R-SSC-5610785">
    <property type="pathway name" value="GLI3 is processed to GLI3R by the proteasome"/>
</dbReference>
<dbReference type="Reactome" id="R-SSC-5632684">
    <property type="pathway name" value="Hedgehog 'on' state"/>
</dbReference>
<dbReference type="Reactome" id="R-SSC-5654726">
    <property type="pathway name" value="Negative regulation of FGFR1 signaling"/>
</dbReference>
<dbReference type="Reactome" id="R-SSC-5654727">
    <property type="pathway name" value="Negative regulation of FGFR2 signaling"/>
</dbReference>
<dbReference type="Reactome" id="R-SSC-5654732">
    <property type="pathway name" value="Negative regulation of FGFR3 signaling"/>
</dbReference>
<dbReference type="Reactome" id="R-SSC-5654733">
    <property type="pathway name" value="Negative regulation of FGFR4 signaling"/>
</dbReference>
<dbReference type="Reactome" id="R-SSC-5655862">
    <property type="pathway name" value="Translesion synthesis by POLK"/>
</dbReference>
<dbReference type="Reactome" id="R-SSC-5656121">
    <property type="pathway name" value="Translesion synthesis by POLI"/>
</dbReference>
<dbReference type="Reactome" id="R-SSC-5656169">
    <property type="pathway name" value="Termination of translesion DNA synthesis"/>
</dbReference>
<dbReference type="Reactome" id="R-SSC-5658442">
    <property type="pathway name" value="Regulation of RAS by GAPs"/>
</dbReference>
<dbReference type="Reactome" id="R-SSC-5668541">
    <property type="pathway name" value="TNFR2 non-canonical NF-kB pathway"/>
</dbReference>
<dbReference type="Reactome" id="R-SSC-5675221">
    <property type="pathway name" value="Negative regulation of MAPK pathway"/>
</dbReference>
<dbReference type="Reactome" id="R-SSC-5675482">
    <property type="pathway name" value="Regulation of necroptotic cell death"/>
</dbReference>
<dbReference type="Reactome" id="R-SSC-5676590">
    <property type="pathway name" value="NIK--&gt;noncanonical NF-kB signaling"/>
</dbReference>
<dbReference type="Reactome" id="R-SSC-5684264">
    <property type="pathway name" value="MAP3K8 (TPL2)-dependent MAPK1/3 activation"/>
</dbReference>
<dbReference type="Reactome" id="R-SSC-5685942">
    <property type="pathway name" value="HDR through Homologous Recombination (HRR)"/>
</dbReference>
<dbReference type="Reactome" id="R-SSC-5687128">
    <property type="pathway name" value="MAPK6/MAPK4 signaling"/>
</dbReference>
<dbReference type="Reactome" id="R-SSC-5689603">
    <property type="pathway name" value="UCH proteinases"/>
</dbReference>
<dbReference type="Reactome" id="R-SSC-5689877">
    <property type="pathway name" value="Josephin domain DUBs"/>
</dbReference>
<dbReference type="Reactome" id="R-SSC-5689880">
    <property type="pathway name" value="Ub-specific processing proteases"/>
</dbReference>
<dbReference type="Reactome" id="R-SSC-5689896">
    <property type="pathway name" value="Ovarian tumor domain proteases"/>
</dbReference>
<dbReference type="Reactome" id="R-SSC-5689901">
    <property type="pathway name" value="Metalloprotease DUBs"/>
</dbReference>
<dbReference type="Reactome" id="R-SSC-5693565">
    <property type="pathway name" value="Recruitment and ATM-mediated phosphorylation of repair and signaling proteins at DNA double strand breaks"/>
</dbReference>
<dbReference type="Reactome" id="R-SSC-5696394">
    <property type="pathway name" value="DNA Damage Recognition in GG-NER"/>
</dbReference>
<dbReference type="Reactome" id="R-SSC-5696395">
    <property type="pathway name" value="Formation of Incision Complex in GG-NER"/>
</dbReference>
<dbReference type="Reactome" id="R-SSC-5696397">
    <property type="pathway name" value="Gap-filling DNA repair synthesis and ligation in GG-NER"/>
</dbReference>
<dbReference type="Reactome" id="R-SSC-5696400">
    <property type="pathway name" value="Dual Incision in GG-NER"/>
</dbReference>
<dbReference type="Reactome" id="R-SSC-6781823">
    <property type="pathway name" value="Formation of TC-NER Pre-Incision Complex"/>
</dbReference>
<dbReference type="Reactome" id="R-SSC-6782135">
    <property type="pathway name" value="Dual incision in TC-NER"/>
</dbReference>
<dbReference type="Reactome" id="R-SSC-6782210">
    <property type="pathway name" value="Gap-filling DNA repair synthesis and ligation in TC-NER"/>
</dbReference>
<dbReference type="Reactome" id="R-SSC-6783310">
    <property type="pathway name" value="Fanconi Anemia Pathway"/>
</dbReference>
<dbReference type="Reactome" id="R-SSC-6804756">
    <property type="pathway name" value="Regulation of TP53 Activity through Phosphorylation"/>
</dbReference>
<dbReference type="Reactome" id="R-SSC-6804757">
    <property type="pathway name" value="Regulation of TP53 Degradation"/>
</dbReference>
<dbReference type="Reactome" id="R-SSC-6804760">
    <property type="pathway name" value="Regulation of TP53 Activity through Methylation"/>
</dbReference>
<dbReference type="Reactome" id="R-SSC-6807004">
    <property type="pathway name" value="Negative regulation of MET activity"/>
</dbReference>
<dbReference type="Reactome" id="R-SSC-68867">
    <property type="pathway name" value="Assembly of the pre-replicative complex"/>
</dbReference>
<dbReference type="Reactome" id="R-SSC-68949">
    <property type="pathway name" value="Orc1 removal from chromatin"/>
</dbReference>
<dbReference type="Reactome" id="R-SSC-69017">
    <property type="pathway name" value="CDK-mediated phosphorylation and removal of Cdc6"/>
</dbReference>
<dbReference type="Reactome" id="R-SSC-69231">
    <property type="pathway name" value="Cyclin D associated events in G1"/>
</dbReference>
<dbReference type="Reactome" id="R-SSC-69481">
    <property type="pathway name" value="G2/M Checkpoints"/>
</dbReference>
<dbReference type="Reactome" id="R-SSC-69601">
    <property type="pathway name" value="Ubiquitin Mediated Degradation of Phosphorylated Cdc25A"/>
</dbReference>
<dbReference type="Reactome" id="R-SSC-75815">
    <property type="pathway name" value="Ubiquitin-dependent degradation of Cyclin D"/>
</dbReference>
<dbReference type="Reactome" id="R-SSC-8849469">
    <property type="pathway name" value="PTK6 Regulates RTKs and Their Effectors AKT1 and DOK1"/>
</dbReference>
<dbReference type="Reactome" id="R-SSC-8852276">
    <property type="pathway name" value="The role of GTSE1 in G2/M progression after G2 checkpoint"/>
</dbReference>
<dbReference type="Reactome" id="R-SSC-8854050">
    <property type="pathway name" value="FBXL7 down-regulates AURKA during mitotic entry and in early mitosis"/>
</dbReference>
<dbReference type="Reactome" id="R-SSC-8856825">
    <property type="pathway name" value="Cargo recognition for clathrin-mediated endocytosis"/>
</dbReference>
<dbReference type="Reactome" id="R-SSC-8856828">
    <property type="pathway name" value="Clathrin-mediated endocytosis"/>
</dbReference>
<dbReference type="Reactome" id="R-SSC-8863795">
    <property type="pathway name" value="Downregulation of ERBB2 signaling"/>
</dbReference>
<dbReference type="Reactome" id="R-SSC-8866427">
    <property type="pathway name" value="VLDLR internalisation and degradation"/>
</dbReference>
<dbReference type="Reactome" id="R-SSC-8866652">
    <property type="pathway name" value="Synthesis of active ubiquitin: roles of E1 and E2 enzymes"/>
</dbReference>
<dbReference type="Reactome" id="R-SSC-8866654">
    <property type="pathway name" value="E3 ubiquitin ligases ubiquitinate target proteins"/>
</dbReference>
<dbReference type="Reactome" id="R-SSC-8939236">
    <property type="pathway name" value="RUNX1 regulates transcription of genes involved in differentiation of HSCs"/>
</dbReference>
<dbReference type="Reactome" id="R-SSC-8939902">
    <property type="pathway name" value="Regulation of RUNX2 expression and activity"/>
</dbReference>
<dbReference type="Reactome" id="R-SSC-8941858">
    <property type="pathway name" value="Regulation of RUNX3 expression and activity"/>
</dbReference>
<dbReference type="Reactome" id="R-SSC-8948747">
    <property type="pathway name" value="Regulation of PTEN localization"/>
</dbReference>
<dbReference type="Reactome" id="R-SSC-8948751">
    <property type="pathway name" value="Regulation of PTEN stability and activity"/>
</dbReference>
<dbReference type="Reactome" id="R-SSC-8951664">
    <property type="pathway name" value="Neddylation"/>
</dbReference>
<dbReference type="Reactome" id="R-SSC-901032">
    <property type="pathway name" value="ER Quality Control Compartment (ERQC)"/>
</dbReference>
<dbReference type="Reactome" id="R-SSC-9020702">
    <property type="pathway name" value="Interleukin-1 signaling"/>
</dbReference>
<dbReference type="Reactome" id="R-SSC-9033241">
    <property type="pathway name" value="Peroxisomal protein import"/>
</dbReference>
<dbReference type="Reactome" id="R-SSC-909733">
    <property type="pathway name" value="Interferon alpha/beta signaling"/>
</dbReference>
<dbReference type="Reactome" id="R-SSC-912631">
    <property type="pathway name" value="Regulation of signaling by CBL"/>
</dbReference>
<dbReference type="Reactome" id="R-SSC-917729">
    <property type="pathway name" value="Endosomal Sorting Complex Required For Transport (ESCRT)"/>
</dbReference>
<dbReference type="Reactome" id="R-SSC-917937">
    <property type="pathway name" value="Iron uptake and transport"/>
</dbReference>
<dbReference type="Reactome" id="R-SSC-936440">
    <property type="pathway name" value="Negative regulators of DDX58/IFIH1 signaling"/>
</dbReference>
<dbReference type="Reactome" id="R-SSC-936964">
    <property type="pathway name" value="Activation of IRF3, IRF7 mediated by TBK1, IKKEpsilon (IKBKE)"/>
</dbReference>
<dbReference type="Reactome" id="R-SSC-937039">
    <property type="pathway name" value="IRAK1 recruits IKK complex"/>
</dbReference>
<dbReference type="Reactome" id="R-SSC-937041">
    <property type="pathway name" value="IKK complex recruitment mediated by RIP1"/>
</dbReference>
<dbReference type="Reactome" id="R-SSC-937042">
    <property type="pathway name" value="IRAK2 mediated activation of TAK1 complex"/>
</dbReference>
<dbReference type="Reactome" id="R-SSC-937072">
    <property type="pathway name" value="TRAF6-mediated induction of TAK1 complex within TLR4 complex"/>
</dbReference>
<dbReference type="Reactome" id="R-SSC-9645460">
    <property type="pathway name" value="Alpha-protein kinase 1 signaling pathway"/>
</dbReference>
<dbReference type="Reactome" id="R-SSC-9646399">
    <property type="pathway name" value="Aggrephagy"/>
</dbReference>
<dbReference type="Reactome" id="R-SSC-9648002">
    <property type="pathway name" value="RAS processing"/>
</dbReference>
<dbReference type="Reactome" id="R-SSC-9664873">
    <property type="pathway name" value="Pexophagy"/>
</dbReference>
<dbReference type="Reactome" id="R-SSC-9706369">
    <property type="pathway name" value="Negative regulation of FLT3"/>
</dbReference>
<dbReference type="Reactome" id="R-SSC-9708530">
    <property type="pathway name" value="Regulation of BACH1 activity"/>
</dbReference>
<dbReference type="Reactome" id="R-SSC-975144">
    <property type="pathway name" value="IRAK1 recruits IKK complex upon TLR7/8 or 9 stimulation"/>
</dbReference>
<dbReference type="Reactome" id="R-SSC-975163">
    <property type="pathway name" value="IRAK2 mediated activation of TAK1 complex upon TLR7/8 or 9 stimulation"/>
</dbReference>
<dbReference type="Reactome" id="R-SSC-9755511">
    <property type="pathway name" value="KEAP1-NFE2L2 pathway"/>
</dbReference>
<dbReference type="Reactome" id="R-SSC-9758274">
    <property type="pathway name" value="Regulation of NF-kappa B signaling"/>
</dbReference>
<dbReference type="Reactome" id="R-SSC-9762114">
    <property type="pathway name" value="GSK3B and BTRC:CUL1-mediated-degradation of NFE2L2"/>
</dbReference>
<dbReference type="Reactome" id="R-SSC-9824878">
    <property type="pathway name" value="Regulation of TBK1, IKKEpsilon (IKBKE)-mediated activation of IRF3, IRF7"/>
</dbReference>
<dbReference type="Reactome" id="R-SSC-983168">
    <property type="pathway name" value="Antigen processing: Ubiquitination &amp; Proteasome degradation"/>
</dbReference>
<dbReference type="Reactome" id="R-SSC-9861718">
    <property type="pathway name" value="Regulation of pyruvate metabolism"/>
</dbReference>
<dbReference type="Proteomes" id="UP000008227">
    <property type="component" value="Unplaced"/>
</dbReference>
<dbReference type="Proteomes" id="UP000314985">
    <property type="component" value="Unplaced"/>
</dbReference>
<dbReference type="Proteomes" id="UP000694570">
    <property type="component" value="Unplaced"/>
</dbReference>
<dbReference type="Proteomes" id="UP000694571">
    <property type="component" value="Unplaced"/>
</dbReference>
<dbReference type="Proteomes" id="UP000694720">
    <property type="component" value="Unplaced"/>
</dbReference>
<dbReference type="Proteomes" id="UP000694722">
    <property type="component" value="Unplaced"/>
</dbReference>
<dbReference type="Proteomes" id="UP000694723">
    <property type="component" value="Unplaced"/>
</dbReference>
<dbReference type="Proteomes" id="UP000694724">
    <property type="component" value="Unplaced"/>
</dbReference>
<dbReference type="Proteomes" id="UP000694725">
    <property type="component" value="Unplaced"/>
</dbReference>
<dbReference type="Proteomes" id="UP000694726">
    <property type="component" value="Unplaced"/>
</dbReference>
<dbReference type="Proteomes" id="UP000694727">
    <property type="component" value="Unplaced"/>
</dbReference>
<dbReference type="Proteomes" id="UP000694728">
    <property type="component" value="Unplaced"/>
</dbReference>
<dbReference type="GO" id="GO:0005737">
    <property type="term" value="C:cytoplasm"/>
    <property type="evidence" value="ECO:0000318"/>
    <property type="project" value="GO_Central"/>
</dbReference>
<dbReference type="GO" id="GO:0005741">
    <property type="term" value="C:mitochondrial outer membrane"/>
    <property type="evidence" value="ECO:0007669"/>
    <property type="project" value="UniProtKB-SubCell"/>
</dbReference>
<dbReference type="GO" id="GO:0005634">
    <property type="term" value="C:nucleus"/>
    <property type="evidence" value="ECO:0000318"/>
    <property type="project" value="GO_Central"/>
</dbReference>
<dbReference type="GO" id="GO:0031386">
    <property type="term" value="F:protein tag activity"/>
    <property type="evidence" value="ECO:0000318"/>
    <property type="project" value="GO_Central"/>
</dbReference>
<dbReference type="GO" id="GO:0031625">
    <property type="term" value="F:ubiquitin protein ligase binding"/>
    <property type="evidence" value="ECO:0000318"/>
    <property type="project" value="GO_Central"/>
</dbReference>
<dbReference type="GO" id="GO:0019941">
    <property type="term" value="P:modification-dependent protein catabolic process"/>
    <property type="evidence" value="ECO:0000318"/>
    <property type="project" value="GO_Central"/>
</dbReference>
<dbReference type="GO" id="GO:0016567">
    <property type="term" value="P:protein ubiquitination"/>
    <property type="evidence" value="ECO:0000318"/>
    <property type="project" value="GO_Central"/>
</dbReference>
<dbReference type="CDD" id="cd01803">
    <property type="entry name" value="Ubl_ubiquitin"/>
    <property type="match status" value="7"/>
</dbReference>
<dbReference type="FunFam" id="3.10.20.90:FF:000158">
    <property type="entry name" value="Polyubiquitin 5"/>
    <property type="match status" value="7"/>
</dbReference>
<dbReference type="Gene3D" id="3.10.20.90">
    <property type="entry name" value="Phosphatidylinositol 3-kinase Catalytic Subunit, Chain A, domain 1"/>
    <property type="match status" value="7"/>
</dbReference>
<dbReference type="InterPro" id="IPR000626">
    <property type="entry name" value="Ubiquitin-like_dom"/>
</dbReference>
<dbReference type="InterPro" id="IPR029071">
    <property type="entry name" value="Ubiquitin-like_domsf"/>
</dbReference>
<dbReference type="InterPro" id="IPR019954">
    <property type="entry name" value="Ubiquitin_CS"/>
</dbReference>
<dbReference type="InterPro" id="IPR019956">
    <property type="entry name" value="Ubiquitin_dom"/>
</dbReference>
<dbReference type="InterPro" id="IPR050158">
    <property type="entry name" value="Ubiquitin_ubiquitin-like"/>
</dbReference>
<dbReference type="PANTHER" id="PTHR10666">
    <property type="entry name" value="UBIQUITIN"/>
    <property type="match status" value="1"/>
</dbReference>
<dbReference type="Pfam" id="PF00240">
    <property type="entry name" value="ubiquitin"/>
    <property type="match status" value="7"/>
</dbReference>
<dbReference type="PRINTS" id="PR00348">
    <property type="entry name" value="UBIQUITIN"/>
</dbReference>
<dbReference type="SMART" id="SM00213">
    <property type="entry name" value="UBQ"/>
    <property type="match status" value="7"/>
</dbReference>
<dbReference type="SUPFAM" id="SSF54236">
    <property type="entry name" value="Ubiquitin-like"/>
    <property type="match status" value="7"/>
</dbReference>
<dbReference type="PROSITE" id="PS00299">
    <property type="entry name" value="UBIQUITIN_1"/>
    <property type="match status" value="7"/>
</dbReference>
<dbReference type="PROSITE" id="PS50053">
    <property type="entry name" value="UBIQUITIN_2"/>
    <property type="match status" value="7"/>
</dbReference>
<reference key="1">
    <citation type="submission" date="2009-06" db="EMBL/GenBank/DDBJ databases">
        <authorList>
            <consortium name="Porcine genome sequencing project"/>
        </authorList>
    </citation>
    <scope>NUCLEOTIDE SEQUENCE [LARGE SCALE GENOMIC DNA]</scope>
</reference>
<reference key="2">
    <citation type="journal article" date="1987" name="DNA">
        <title>An mRNA encoding poly-ubiquitin in porcine corpus luteum: identification by cDNA cloning and sequencing.</title>
        <authorList>
            <person name="Einspanier R."/>
            <person name="Sharma H.S."/>
            <person name="Scheit K.H."/>
        </authorList>
    </citation>
    <scope>NUCLEOTIDE SEQUENCE [MRNA] OF 279-533</scope>
</reference>
<name>UBC_PIG</name>